<accession>Q0SH75</accession>
<keyword id="KW-0067">ATP-binding</keyword>
<keyword id="KW-0436">Ligase</keyword>
<keyword id="KW-0547">Nucleotide-binding</keyword>
<dbReference type="EC" id="6.3.2.2" evidence="1"/>
<dbReference type="EMBL" id="CP000431">
    <property type="protein sequence ID" value="ABG93111.1"/>
    <property type="molecule type" value="Genomic_DNA"/>
</dbReference>
<dbReference type="RefSeq" id="WP_011594356.1">
    <property type="nucleotide sequence ID" value="NC_008268.1"/>
</dbReference>
<dbReference type="SMR" id="Q0SH75"/>
<dbReference type="KEGG" id="rha:RHA1_ro01287"/>
<dbReference type="PATRIC" id="fig|101510.16.peg.1312"/>
<dbReference type="eggNOG" id="COG2170">
    <property type="taxonomic scope" value="Bacteria"/>
</dbReference>
<dbReference type="HOGENOM" id="CLU_044848_0_0_11"/>
<dbReference type="OrthoDB" id="9803842at2"/>
<dbReference type="Proteomes" id="UP000008710">
    <property type="component" value="Chromosome"/>
</dbReference>
<dbReference type="GO" id="GO:0005524">
    <property type="term" value="F:ATP binding"/>
    <property type="evidence" value="ECO:0007669"/>
    <property type="project" value="UniProtKB-KW"/>
</dbReference>
<dbReference type="GO" id="GO:0004357">
    <property type="term" value="F:glutamate-cysteine ligase activity"/>
    <property type="evidence" value="ECO:0007669"/>
    <property type="project" value="UniProtKB-EC"/>
</dbReference>
<dbReference type="GO" id="GO:0042398">
    <property type="term" value="P:modified amino acid biosynthetic process"/>
    <property type="evidence" value="ECO:0007669"/>
    <property type="project" value="InterPro"/>
</dbReference>
<dbReference type="Gene3D" id="3.30.590.20">
    <property type="match status" value="1"/>
</dbReference>
<dbReference type="HAMAP" id="MF_01609">
    <property type="entry name" value="Glu_cys_ligase_2"/>
    <property type="match status" value="1"/>
</dbReference>
<dbReference type="InterPro" id="IPR050141">
    <property type="entry name" value="GCL_type2/YbdK_subfam"/>
</dbReference>
<dbReference type="InterPro" id="IPR006336">
    <property type="entry name" value="GCS2"/>
</dbReference>
<dbReference type="InterPro" id="IPR014746">
    <property type="entry name" value="Gln_synth/guanido_kin_cat_dom"/>
</dbReference>
<dbReference type="InterPro" id="IPR011793">
    <property type="entry name" value="YbdK"/>
</dbReference>
<dbReference type="NCBIfam" id="TIGR02050">
    <property type="entry name" value="gshA_cyan_rel"/>
    <property type="match status" value="1"/>
</dbReference>
<dbReference type="NCBIfam" id="NF010041">
    <property type="entry name" value="PRK13517.1-1"/>
    <property type="match status" value="1"/>
</dbReference>
<dbReference type="PANTHER" id="PTHR36510">
    <property type="entry name" value="GLUTAMATE--CYSTEINE LIGASE 2-RELATED"/>
    <property type="match status" value="1"/>
</dbReference>
<dbReference type="PANTHER" id="PTHR36510:SF1">
    <property type="entry name" value="GLUTAMATE--CYSTEINE LIGASE 2-RELATED"/>
    <property type="match status" value="1"/>
</dbReference>
<dbReference type="Pfam" id="PF04107">
    <property type="entry name" value="GCS2"/>
    <property type="match status" value="1"/>
</dbReference>
<dbReference type="SUPFAM" id="SSF55931">
    <property type="entry name" value="Glutamine synthetase/guanido kinase"/>
    <property type="match status" value="1"/>
</dbReference>
<evidence type="ECO:0000255" key="1">
    <source>
        <dbReference type="HAMAP-Rule" id="MF_01609"/>
    </source>
</evidence>
<protein>
    <recommendedName>
        <fullName evidence="1">Putative glutamate--cysteine ligase 2-1</fullName>
        <ecNumber evidence="1">6.3.2.2</ecNumber>
    </recommendedName>
    <alternativeName>
        <fullName evidence="1">Gamma-glutamylcysteine synthetase 2-1</fullName>
        <shortName evidence="1">GCS 2-1</shortName>
        <shortName evidence="1">Gamma-GCS 2-1</shortName>
    </alternativeName>
</protein>
<gene>
    <name type="ordered locus">RHA1_ro01287</name>
</gene>
<reference key="1">
    <citation type="journal article" date="2006" name="Proc. Natl. Acad. Sci. U.S.A.">
        <title>The complete genome of Rhodococcus sp. RHA1 provides insights into a catabolic powerhouse.</title>
        <authorList>
            <person name="McLeod M.P."/>
            <person name="Warren R.L."/>
            <person name="Hsiao W.W.L."/>
            <person name="Araki N."/>
            <person name="Myhre M."/>
            <person name="Fernandes C."/>
            <person name="Miyazawa D."/>
            <person name="Wong W."/>
            <person name="Lillquist A.L."/>
            <person name="Wang D."/>
            <person name="Dosanjh M."/>
            <person name="Hara H."/>
            <person name="Petrescu A."/>
            <person name="Morin R.D."/>
            <person name="Yang G."/>
            <person name="Stott J.M."/>
            <person name="Schein J.E."/>
            <person name="Shin H."/>
            <person name="Smailus D."/>
            <person name="Siddiqui A.S."/>
            <person name="Marra M.A."/>
            <person name="Jones S.J.M."/>
            <person name="Holt R."/>
            <person name="Brinkman F.S.L."/>
            <person name="Miyauchi K."/>
            <person name="Fukuda M."/>
            <person name="Davies J.E."/>
            <person name="Mohn W.W."/>
            <person name="Eltis L.D."/>
        </authorList>
    </citation>
    <scope>NUCLEOTIDE SEQUENCE [LARGE SCALE GENOMIC DNA]</scope>
    <source>
        <strain>RHA1</strain>
    </source>
</reference>
<feature type="chain" id="PRO_0000255808" description="Putative glutamate--cysteine ligase 2-1">
    <location>
        <begin position="1"/>
        <end position="369"/>
    </location>
</feature>
<organism>
    <name type="scientific">Rhodococcus jostii (strain RHA1)</name>
    <dbReference type="NCBI Taxonomy" id="101510"/>
    <lineage>
        <taxon>Bacteria</taxon>
        <taxon>Bacillati</taxon>
        <taxon>Actinomycetota</taxon>
        <taxon>Actinomycetes</taxon>
        <taxon>Mycobacteriales</taxon>
        <taxon>Nocardiaceae</taxon>
        <taxon>Rhodococcus</taxon>
    </lineage>
</organism>
<sequence length="369" mass="39880">MSPAATESGRDLSVGVEEEFFLVDESGHLSAAGPDVVTEAGHDIHGLQRELARCQIETATGVCHTGEELHEELRSLRRRLAKAAAGRDLLLLPSGTSLVVEGLPPAITPSPRYEEMARHFGSIVDTVTTCGCHVHVGIPSRDVGVRVSNLVRSWLPVLLALAANSPFHSGHDTAYHSWRHIMWSRWPSAGPPPHFDSADEYEATVGAMIGTGAAMDRGMIYWHVRLADKQPTIEVRIADVAMTAAHAALYAVVVKGLVGWALQSLDDGLTVPWLRAELLRAQLWRAARDGLDGECTSPAADRVLPIRRQLELLNDCVAPGLGPSDRAFLESGLDTVLREGTGAERQRAEFTRVGTLAAVVDLLTREVVS</sequence>
<proteinExistence type="inferred from homology"/>
<name>GCS21_RHOJR</name>
<comment type="function">
    <text evidence="1">ATP-dependent carboxylate-amine ligase which exhibits weak glutamate--cysteine ligase activity.</text>
</comment>
<comment type="catalytic activity">
    <reaction evidence="1">
        <text>L-cysteine + L-glutamate + ATP = gamma-L-glutamyl-L-cysteine + ADP + phosphate + H(+)</text>
        <dbReference type="Rhea" id="RHEA:13285"/>
        <dbReference type="ChEBI" id="CHEBI:15378"/>
        <dbReference type="ChEBI" id="CHEBI:29985"/>
        <dbReference type="ChEBI" id="CHEBI:30616"/>
        <dbReference type="ChEBI" id="CHEBI:35235"/>
        <dbReference type="ChEBI" id="CHEBI:43474"/>
        <dbReference type="ChEBI" id="CHEBI:58173"/>
        <dbReference type="ChEBI" id="CHEBI:456216"/>
        <dbReference type="EC" id="6.3.2.2"/>
    </reaction>
</comment>
<comment type="similarity">
    <text evidence="1">Belongs to the glutamate--cysteine ligase type 2 family. YbdK subfamily.</text>
</comment>